<name>COAX_PORG3</name>
<organism>
    <name type="scientific">Porphyromonas gingivalis (strain ATCC 33277 / DSM 20709 / CIP 103683 / JCM 12257 / NCTC 11834 / 2561)</name>
    <dbReference type="NCBI Taxonomy" id="431947"/>
    <lineage>
        <taxon>Bacteria</taxon>
        <taxon>Pseudomonadati</taxon>
        <taxon>Bacteroidota</taxon>
        <taxon>Bacteroidia</taxon>
        <taxon>Bacteroidales</taxon>
        <taxon>Porphyromonadaceae</taxon>
        <taxon>Porphyromonas</taxon>
    </lineage>
</organism>
<proteinExistence type="inferred from homology"/>
<accession>B2RKY9</accession>
<protein>
    <recommendedName>
        <fullName evidence="1">Type III pantothenate kinase</fullName>
        <ecNumber evidence="1">2.7.1.33</ecNumber>
    </recommendedName>
    <alternativeName>
        <fullName evidence="1">PanK-III</fullName>
    </alternativeName>
    <alternativeName>
        <fullName evidence="1">Pantothenic acid kinase</fullName>
    </alternativeName>
</protein>
<evidence type="ECO:0000255" key="1">
    <source>
        <dbReference type="HAMAP-Rule" id="MF_01274"/>
    </source>
</evidence>
<comment type="function">
    <text evidence="1">Catalyzes the phosphorylation of pantothenate (Pan), the first step in CoA biosynthesis.</text>
</comment>
<comment type="catalytic activity">
    <reaction evidence="1">
        <text>(R)-pantothenate + ATP = (R)-4'-phosphopantothenate + ADP + H(+)</text>
        <dbReference type="Rhea" id="RHEA:16373"/>
        <dbReference type="ChEBI" id="CHEBI:10986"/>
        <dbReference type="ChEBI" id="CHEBI:15378"/>
        <dbReference type="ChEBI" id="CHEBI:29032"/>
        <dbReference type="ChEBI" id="CHEBI:30616"/>
        <dbReference type="ChEBI" id="CHEBI:456216"/>
        <dbReference type="EC" id="2.7.1.33"/>
    </reaction>
</comment>
<comment type="cofactor">
    <cofactor evidence="1">
        <name>NH4(+)</name>
        <dbReference type="ChEBI" id="CHEBI:28938"/>
    </cofactor>
    <cofactor evidence="1">
        <name>K(+)</name>
        <dbReference type="ChEBI" id="CHEBI:29103"/>
    </cofactor>
    <text evidence="1">A monovalent cation. Ammonium or potassium.</text>
</comment>
<comment type="pathway">
    <text evidence="1">Cofactor biosynthesis; coenzyme A biosynthesis; CoA from (R)-pantothenate: step 1/5.</text>
</comment>
<comment type="subunit">
    <text evidence="1">Homodimer.</text>
</comment>
<comment type="subcellular location">
    <subcellularLocation>
        <location evidence="1">Cytoplasm</location>
    </subcellularLocation>
</comment>
<comment type="similarity">
    <text evidence="1">Belongs to the type III pantothenate kinase family.</text>
</comment>
<gene>
    <name evidence="1" type="primary">coaX</name>
    <name type="ordered locus">PGN_1515</name>
</gene>
<dbReference type="EC" id="2.7.1.33" evidence="1"/>
<dbReference type="EMBL" id="AP009380">
    <property type="protein sequence ID" value="BAG34034.1"/>
    <property type="molecule type" value="Genomic_DNA"/>
</dbReference>
<dbReference type="RefSeq" id="WP_012458335.1">
    <property type="nucleotide sequence ID" value="NC_010729.1"/>
</dbReference>
<dbReference type="SMR" id="B2RKY9"/>
<dbReference type="GeneID" id="29256694"/>
<dbReference type="KEGG" id="pgn:PGN_1515"/>
<dbReference type="eggNOG" id="COG1521">
    <property type="taxonomic scope" value="Bacteria"/>
</dbReference>
<dbReference type="HOGENOM" id="CLU_066627_2_0_10"/>
<dbReference type="OrthoDB" id="9804707at2"/>
<dbReference type="BioCyc" id="PGIN431947:G1G2V-1717-MONOMER"/>
<dbReference type="UniPathway" id="UPA00241">
    <property type="reaction ID" value="UER00352"/>
</dbReference>
<dbReference type="Proteomes" id="UP000008842">
    <property type="component" value="Chromosome"/>
</dbReference>
<dbReference type="GO" id="GO:0005737">
    <property type="term" value="C:cytoplasm"/>
    <property type="evidence" value="ECO:0007669"/>
    <property type="project" value="UniProtKB-SubCell"/>
</dbReference>
<dbReference type="GO" id="GO:0005524">
    <property type="term" value="F:ATP binding"/>
    <property type="evidence" value="ECO:0007669"/>
    <property type="project" value="UniProtKB-UniRule"/>
</dbReference>
<dbReference type="GO" id="GO:0046872">
    <property type="term" value="F:metal ion binding"/>
    <property type="evidence" value="ECO:0007669"/>
    <property type="project" value="UniProtKB-KW"/>
</dbReference>
<dbReference type="GO" id="GO:0004594">
    <property type="term" value="F:pantothenate kinase activity"/>
    <property type="evidence" value="ECO:0007669"/>
    <property type="project" value="UniProtKB-UniRule"/>
</dbReference>
<dbReference type="GO" id="GO:0015937">
    <property type="term" value="P:coenzyme A biosynthetic process"/>
    <property type="evidence" value="ECO:0007669"/>
    <property type="project" value="UniProtKB-UniRule"/>
</dbReference>
<dbReference type="CDD" id="cd24015">
    <property type="entry name" value="ASKHA_NBD_PanK-III"/>
    <property type="match status" value="1"/>
</dbReference>
<dbReference type="Gene3D" id="3.30.420.40">
    <property type="match status" value="1"/>
</dbReference>
<dbReference type="HAMAP" id="MF_01274">
    <property type="entry name" value="Pantothen_kinase_3"/>
    <property type="match status" value="1"/>
</dbReference>
<dbReference type="InterPro" id="IPR043129">
    <property type="entry name" value="ATPase_NBD"/>
</dbReference>
<dbReference type="InterPro" id="IPR004619">
    <property type="entry name" value="Type_III_PanK"/>
</dbReference>
<dbReference type="NCBIfam" id="TIGR00671">
    <property type="entry name" value="baf"/>
    <property type="match status" value="1"/>
</dbReference>
<dbReference type="NCBIfam" id="NF009851">
    <property type="entry name" value="PRK13320.1-3"/>
    <property type="match status" value="1"/>
</dbReference>
<dbReference type="PANTHER" id="PTHR34265">
    <property type="entry name" value="TYPE III PANTOTHENATE KINASE"/>
    <property type="match status" value="1"/>
</dbReference>
<dbReference type="PANTHER" id="PTHR34265:SF1">
    <property type="entry name" value="TYPE III PANTOTHENATE KINASE"/>
    <property type="match status" value="1"/>
</dbReference>
<dbReference type="Pfam" id="PF03309">
    <property type="entry name" value="Pan_kinase"/>
    <property type="match status" value="1"/>
</dbReference>
<dbReference type="SUPFAM" id="SSF53067">
    <property type="entry name" value="Actin-like ATPase domain"/>
    <property type="match status" value="2"/>
</dbReference>
<sequence length="244" mass="26099">MSFNLIVDQGNSACKVAFIRNNGIESISFLPGKAGQALSHLVAPHRFDKAIYSSVGLPDEEAEAIVRSCAAASLMMGTETPVPLRLQYDRRTLGADRLAAVVGAHSLYPNTELLVIDAGTAITYERVSAEGIYLGGNISPGLHLRFKALHLFTGRLPLIDPSGISPKIAEYGSSTEEAITAGVIHGLAGEIDRYIDDLHAKEGRSAVILTGGDANYLARIIRSGILIHPDLVLLGLNRILEYNV</sequence>
<keyword id="KW-0067">ATP-binding</keyword>
<keyword id="KW-0173">Coenzyme A biosynthesis</keyword>
<keyword id="KW-0963">Cytoplasm</keyword>
<keyword id="KW-0418">Kinase</keyword>
<keyword id="KW-0479">Metal-binding</keyword>
<keyword id="KW-0547">Nucleotide-binding</keyword>
<keyword id="KW-0630">Potassium</keyword>
<keyword id="KW-0808">Transferase</keyword>
<reference key="1">
    <citation type="journal article" date="2008" name="DNA Res.">
        <title>Determination of the genome sequence of Porphyromonas gingivalis strain ATCC 33277 and genomic comparison with strain W83 revealed extensive genome rearrangements in P. gingivalis.</title>
        <authorList>
            <person name="Naito M."/>
            <person name="Hirakawa H."/>
            <person name="Yamashita A."/>
            <person name="Ohara N."/>
            <person name="Shoji M."/>
            <person name="Yukitake H."/>
            <person name="Nakayama K."/>
            <person name="Toh H."/>
            <person name="Yoshimura F."/>
            <person name="Kuhara S."/>
            <person name="Hattori M."/>
            <person name="Hayashi T."/>
            <person name="Nakayama K."/>
        </authorList>
    </citation>
    <scope>NUCLEOTIDE SEQUENCE [LARGE SCALE GENOMIC DNA]</scope>
    <source>
        <strain>ATCC 33277 / DSM 20709 / CIP 103683 / JCM 12257 / NCTC 11834 / 2561</strain>
    </source>
</reference>
<feature type="chain" id="PRO_1000140252" description="Type III pantothenate kinase">
    <location>
        <begin position="1"/>
        <end position="244"/>
    </location>
</feature>
<feature type="active site" description="Proton acceptor" evidence="1">
    <location>
        <position position="96"/>
    </location>
</feature>
<feature type="binding site" evidence="1">
    <location>
        <begin position="8"/>
        <end position="15"/>
    </location>
    <ligand>
        <name>ATP</name>
        <dbReference type="ChEBI" id="CHEBI:30616"/>
    </ligand>
</feature>
<feature type="binding site" evidence="1">
    <location>
        <begin position="94"/>
        <end position="97"/>
    </location>
    <ligand>
        <name>substrate</name>
    </ligand>
</feature>
<feature type="binding site" evidence="1">
    <location>
        <position position="117"/>
    </location>
    <ligand>
        <name>K(+)</name>
        <dbReference type="ChEBI" id="CHEBI:29103"/>
    </ligand>
</feature>
<feature type="binding site" evidence="1">
    <location>
        <position position="120"/>
    </location>
    <ligand>
        <name>ATP</name>
        <dbReference type="ChEBI" id="CHEBI:30616"/>
    </ligand>
</feature>
<feature type="binding site" evidence="1">
    <location>
        <position position="175"/>
    </location>
    <ligand>
        <name>substrate</name>
    </ligand>
</feature>